<name>NUOD_DESRM</name>
<sequence>MTIKTEEFLLNLGPQHPSTHGVFRIVLTLDGETVVKAVPVPGYLHRGIEKLLESRTYTQVIPYTDRLDYLAGMLMNWGYVHAVEKLMEVEIPERAEYIRVIVGELSRIASHLVATGAYAADIGGLTGFIYTFRDREEIMDLFEMISGARLTPSFMRIGGVAYDIPDGFMERCKKFVDYLPEAIKEYNTLITGNEIFQARTKNVAILSAEKAIDMSLSGPVLRATGVNYDLRKVRPYSVYERFEFEVPLGTKGDCFDRYYIRLLEMEQSARIIQQAMDQIPEGPIRAKIPKMIKPPVGEAYAEIESSKGIMGTYVVSDGSTKPYRVHFRRPSFVNLGYLNEMLRGWKIADVIAILGSIDIVLGEVDA</sequence>
<proteinExistence type="inferred from homology"/>
<accession>A4J657</accession>
<protein>
    <recommendedName>
        <fullName evidence="1">NADH-quinone oxidoreductase subunit D</fullName>
        <ecNumber evidence="1">7.1.1.-</ecNumber>
    </recommendedName>
    <alternativeName>
        <fullName evidence="1">NADH dehydrogenase I subunit D</fullName>
    </alternativeName>
    <alternativeName>
        <fullName evidence="1">NDH-1 subunit D</fullName>
    </alternativeName>
</protein>
<gene>
    <name evidence="1" type="primary">nuoD</name>
    <name type="ordered locus">Dred_2043</name>
</gene>
<organism>
    <name type="scientific">Desulforamulus reducens (strain ATCC BAA-1160 / DSM 100696 / MI-1)</name>
    <name type="common">Desulfotomaculum reducens</name>
    <dbReference type="NCBI Taxonomy" id="349161"/>
    <lineage>
        <taxon>Bacteria</taxon>
        <taxon>Bacillati</taxon>
        <taxon>Bacillota</taxon>
        <taxon>Clostridia</taxon>
        <taxon>Eubacteriales</taxon>
        <taxon>Peptococcaceae</taxon>
        <taxon>Desulforamulus</taxon>
    </lineage>
</organism>
<feature type="chain" id="PRO_0000371863" description="NADH-quinone oxidoreductase subunit D">
    <location>
        <begin position="1"/>
        <end position="366"/>
    </location>
</feature>
<keyword id="KW-1003">Cell membrane</keyword>
<keyword id="KW-0472">Membrane</keyword>
<keyword id="KW-0520">NAD</keyword>
<keyword id="KW-0874">Quinone</keyword>
<keyword id="KW-1185">Reference proteome</keyword>
<keyword id="KW-1278">Translocase</keyword>
<keyword id="KW-0813">Transport</keyword>
<evidence type="ECO:0000255" key="1">
    <source>
        <dbReference type="HAMAP-Rule" id="MF_01358"/>
    </source>
</evidence>
<comment type="function">
    <text evidence="1">NDH-1 shuttles electrons from NADH, via FMN and iron-sulfur (Fe-S) centers, to quinones in the respiratory chain. The immediate electron acceptor for the enzyme in this species is believed to be a menaquinone. Couples the redox reaction to proton translocation (for every two electrons transferred, four hydrogen ions are translocated across the cytoplasmic membrane), and thus conserves the redox energy in a proton gradient.</text>
</comment>
<comment type="catalytic activity">
    <reaction evidence="1">
        <text>a quinone + NADH + 5 H(+)(in) = a quinol + NAD(+) + 4 H(+)(out)</text>
        <dbReference type="Rhea" id="RHEA:57888"/>
        <dbReference type="ChEBI" id="CHEBI:15378"/>
        <dbReference type="ChEBI" id="CHEBI:24646"/>
        <dbReference type="ChEBI" id="CHEBI:57540"/>
        <dbReference type="ChEBI" id="CHEBI:57945"/>
        <dbReference type="ChEBI" id="CHEBI:132124"/>
    </reaction>
</comment>
<comment type="subunit">
    <text evidence="1">NDH-1 is composed of 14 different subunits. Subunits NuoB, C, D, E, F, and G constitute the peripheral sector of the complex.</text>
</comment>
<comment type="subcellular location">
    <subcellularLocation>
        <location evidence="1">Cell membrane</location>
        <topology evidence="1">Peripheral membrane protein</topology>
        <orientation evidence="1">Cytoplasmic side</orientation>
    </subcellularLocation>
</comment>
<comment type="similarity">
    <text evidence="1">Belongs to the complex I 49 kDa subunit family.</text>
</comment>
<dbReference type="EC" id="7.1.1.-" evidence="1"/>
<dbReference type="EMBL" id="CP000612">
    <property type="protein sequence ID" value="ABO50560.1"/>
    <property type="molecule type" value="Genomic_DNA"/>
</dbReference>
<dbReference type="RefSeq" id="WP_011878366.1">
    <property type="nucleotide sequence ID" value="NC_009253.1"/>
</dbReference>
<dbReference type="SMR" id="A4J657"/>
<dbReference type="STRING" id="349161.Dred_2043"/>
<dbReference type="KEGG" id="drm:Dred_2043"/>
<dbReference type="eggNOG" id="COG0649">
    <property type="taxonomic scope" value="Bacteria"/>
</dbReference>
<dbReference type="HOGENOM" id="CLU_015134_1_2_9"/>
<dbReference type="OrthoDB" id="9801496at2"/>
<dbReference type="Proteomes" id="UP000001556">
    <property type="component" value="Chromosome"/>
</dbReference>
<dbReference type="GO" id="GO:0005886">
    <property type="term" value="C:plasma membrane"/>
    <property type="evidence" value="ECO:0007669"/>
    <property type="project" value="UniProtKB-SubCell"/>
</dbReference>
<dbReference type="GO" id="GO:0051287">
    <property type="term" value="F:NAD binding"/>
    <property type="evidence" value="ECO:0007669"/>
    <property type="project" value="InterPro"/>
</dbReference>
<dbReference type="GO" id="GO:0050136">
    <property type="term" value="F:NADH:ubiquinone reductase (non-electrogenic) activity"/>
    <property type="evidence" value="ECO:0007669"/>
    <property type="project" value="UniProtKB-UniRule"/>
</dbReference>
<dbReference type="GO" id="GO:0048038">
    <property type="term" value="F:quinone binding"/>
    <property type="evidence" value="ECO:0007669"/>
    <property type="project" value="UniProtKB-KW"/>
</dbReference>
<dbReference type="Gene3D" id="1.10.645.10">
    <property type="entry name" value="Cytochrome-c3 Hydrogenase, chain B"/>
    <property type="match status" value="1"/>
</dbReference>
<dbReference type="HAMAP" id="MF_01358">
    <property type="entry name" value="NDH1_NuoD"/>
    <property type="match status" value="1"/>
</dbReference>
<dbReference type="InterPro" id="IPR001135">
    <property type="entry name" value="NADH_Q_OxRdtase_suD"/>
</dbReference>
<dbReference type="InterPro" id="IPR014029">
    <property type="entry name" value="NADH_UbQ_OxRdtase_49kDa_CS"/>
</dbReference>
<dbReference type="InterPro" id="IPR022885">
    <property type="entry name" value="NDH1_su_D/H"/>
</dbReference>
<dbReference type="InterPro" id="IPR029014">
    <property type="entry name" value="NiFe-Hase_large"/>
</dbReference>
<dbReference type="NCBIfam" id="NF004739">
    <property type="entry name" value="PRK06075.1"/>
    <property type="match status" value="1"/>
</dbReference>
<dbReference type="NCBIfam" id="NF008974">
    <property type="entry name" value="PRK12322.1"/>
    <property type="match status" value="1"/>
</dbReference>
<dbReference type="PANTHER" id="PTHR11993:SF10">
    <property type="entry name" value="NADH DEHYDROGENASE [UBIQUINONE] IRON-SULFUR PROTEIN 2, MITOCHONDRIAL"/>
    <property type="match status" value="1"/>
</dbReference>
<dbReference type="PANTHER" id="PTHR11993">
    <property type="entry name" value="NADH-UBIQUINONE OXIDOREDUCTASE 49 KDA SUBUNIT"/>
    <property type="match status" value="1"/>
</dbReference>
<dbReference type="Pfam" id="PF00346">
    <property type="entry name" value="Complex1_49kDa"/>
    <property type="match status" value="2"/>
</dbReference>
<dbReference type="SUPFAM" id="SSF56762">
    <property type="entry name" value="HydB/Nqo4-like"/>
    <property type="match status" value="1"/>
</dbReference>
<dbReference type="PROSITE" id="PS00535">
    <property type="entry name" value="COMPLEX1_49K"/>
    <property type="match status" value="1"/>
</dbReference>
<reference key="1">
    <citation type="submission" date="2007-03" db="EMBL/GenBank/DDBJ databases">
        <title>Complete sequence of Desulfotomaculum reducens MI-1.</title>
        <authorList>
            <consortium name="US DOE Joint Genome Institute"/>
            <person name="Copeland A."/>
            <person name="Lucas S."/>
            <person name="Lapidus A."/>
            <person name="Barry K."/>
            <person name="Detter J.C."/>
            <person name="Glavina del Rio T."/>
            <person name="Hammon N."/>
            <person name="Israni S."/>
            <person name="Dalin E."/>
            <person name="Tice H."/>
            <person name="Pitluck S."/>
            <person name="Sims D."/>
            <person name="Brettin T."/>
            <person name="Bruce D."/>
            <person name="Han C."/>
            <person name="Tapia R."/>
            <person name="Schmutz J."/>
            <person name="Larimer F."/>
            <person name="Land M."/>
            <person name="Hauser L."/>
            <person name="Kyrpides N."/>
            <person name="Kim E."/>
            <person name="Tebo B.M."/>
            <person name="Richardson P."/>
        </authorList>
    </citation>
    <scope>NUCLEOTIDE SEQUENCE [LARGE SCALE GENOMIC DNA]</scope>
    <source>
        <strain>ATCC BAA-1160 / DSM 100696 / MI-1</strain>
    </source>
</reference>